<protein>
    <recommendedName>
        <fullName evidence="2">Type VII secretion system extracellular protein A</fullName>
        <shortName evidence="2">Ess extracellular protein A</shortName>
    </recommendedName>
</protein>
<name>ESXA_STAAC</name>
<sequence>MAMIKMSPEEIRAKSQSYGQGSDQIRQILSDLTRAQGEIAANWEGQAFSRFEEQFQQLSPKVEKFAQLLEEIKQQLNSTADAVQEQDQQLSNNFGLQ</sequence>
<feature type="chain" id="PRO_0000167823" description="Type VII secretion system extracellular protein A">
    <location>
        <begin position="1"/>
        <end position="97"/>
    </location>
</feature>
<feature type="coiled-coil region" evidence="3">
    <location>
        <begin position="61"/>
        <end position="93"/>
    </location>
</feature>
<accession>Q5HJ91</accession>
<keyword id="KW-0175">Coiled coil</keyword>
<keyword id="KW-0964">Secreted</keyword>
<keyword id="KW-0843">Virulence</keyword>
<organism>
    <name type="scientific">Staphylococcus aureus (strain COL)</name>
    <dbReference type="NCBI Taxonomy" id="93062"/>
    <lineage>
        <taxon>Bacteria</taxon>
        <taxon>Bacillati</taxon>
        <taxon>Bacillota</taxon>
        <taxon>Bacilli</taxon>
        <taxon>Bacillales</taxon>
        <taxon>Staphylococcaceae</taxon>
        <taxon>Staphylococcus</taxon>
    </lineage>
</organism>
<reference key="1">
    <citation type="journal article" date="2005" name="J. Bacteriol.">
        <title>Insights on evolution of virulence and resistance from the complete genome analysis of an early methicillin-resistant Staphylococcus aureus strain and a biofilm-producing methicillin-resistant Staphylococcus epidermidis strain.</title>
        <authorList>
            <person name="Gill S.R."/>
            <person name="Fouts D.E."/>
            <person name="Archer G.L."/>
            <person name="Mongodin E.F."/>
            <person name="DeBoy R.T."/>
            <person name="Ravel J."/>
            <person name="Paulsen I.T."/>
            <person name="Kolonay J.F."/>
            <person name="Brinkac L.M."/>
            <person name="Beanan M.J."/>
            <person name="Dodson R.J."/>
            <person name="Daugherty S.C."/>
            <person name="Madupu R."/>
            <person name="Angiuoli S.V."/>
            <person name="Durkin A.S."/>
            <person name="Haft D.H."/>
            <person name="Vamathevan J.J."/>
            <person name="Khouri H."/>
            <person name="Utterback T.R."/>
            <person name="Lee C."/>
            <person name="Dimitrov G."/>
            <person name="Jiang L."/>
            <person name="Qin H."/>
            <person name="Weidman J."/>
            <person name="Tran K."/>
            <person name="Kang K.H."/>
            <person name="Hance I.R."/>
            <person name="Nelson K.E."/>
            <person name="Fraser C.M."/>
        </authorList>
    </citation>
    <scope>NUCLEOTIDE SEQUENCE [LARGE SCALE GENOMIC DNA]</scope>
    <source>
        <strain>COL</strain>
    </source>
</reference>
<evidence type="ECO:0000250" key="1">
    <source>
        <dbReference type="UniProtKB" id="A0A0H2XI99"/>
    </source>
</evidence>
<evidence type="ECO:0000250" key="2">
    <source>
        <dbReference type="UniProtKB" id="P0C046"/>
    </source>
</evidence>
<evidence type="ECO:0000255" key="3"/>
<evidence type="ECO:0000305" key="4"/>
<gene>
    <name evidence="2" type="primary">esxA</name>
    <name type="ordered locus">SACOL0271</name>
</gene>
<proteinExistence type="inferred from homology"/>
<comment type="function">
    <text evidence="1 2">Virulence factor that is important for the establishment of infection in the host. EsxA is required for EsxB synthesis as well as secretion (By similarity). Modulates host cell apoptotic pathways and mediates together with EsxB the release of S.aureus from the host cell. By acting on apoptosis, plays a role in the modulation of dendritic cell-mediated immunity (By similarity).</text>
</comment>
<comment type="subcellular location">
    <subcellularLocation>
        <location evidence="2">Secreted</location>
    </subcellularLocation>
    <text evidence="2">Secreted via the ESAT-6 secretion system (Ess) / type VII secretion system (T7SS).</text>
</comment>
<comment type="similarity">
    <text evidence="4">Belongs to the WXG100 family. sagEsxA-like subfamily.</text>
</comment>
<dbReference type="EMBL" id="CP000046">
    <property type="protein sequence ID" value="AAW38825.1"/>
    <property type="molecule type" value="Genomic_DNA"/>
</dbReference>
<dbReference type="RefSeq" id="WP_001240826.1">
    <property type="nucleotide sequence ID" value="NZ_JBGOFO010000001.1"/>
</dbReference>
<dbReference type="SMR" id="Q5HJ91"/>
<dbReference type="GeneID" id="98344606"/>
<dbReference type="KEGG" id="sac:SACOL0271"/>
<dbReference type="HOGENOM" id="CLU_158563_4_0_9"/>
<dbReference type="Proteomes" id="UP000000530">
    <property type="component" value="Chromosome"/>
</dbReference>
<dbReference type="GO" id="GO:0005576">
    <property type="term" value="C:extracellular region"/>
    <property type="evidence" value="ECO:0007669"/>
    <property type="project" value="UniProtKB-SubCell"/>
</dbReference>
<dbReference type="Gene3D" id="1.10.287.1060">
    <property type="entry name" value="ESAT-6-like"/>
    <property type="match status" value="1"/>
</dbReference>
<dbReference type="InterPro" id="IPR036689">
    <property type="entry name" value="ESAT-6-like_sf"/>
</dbReference>
<dbReference type="InterPro" id="IPR010310">
    <property type="entry name" value="T7SS_ESAT-6-like"/>
</dbReference>
<dbReference type="NCBIfam" id="TIGR03930">
    <property type="entry name" value="WXG100_ESAT6"/>
    <property type="match status" value="1"/>
</dbReference>
<dbReference type="Pfam" id="PF06013">
    <property type="entry name" value="WXG100"/>
    <property type="match status" value="1"/>
</dbReference>
<dbReference type="SUPFAM" id="SSF140453">
    <property type="entry name" value="EsxAB dimer-like"/>
    <property type="match status" value="1"/>
</dbReference>